<gene>
    <name evidence="1" type="primary">ubiE</name>
    <name type="ordered locus">Bphyt_0649</name>
</gene>
<proteinExistence type="inferred from homology"/>
<protein>
    <recommendedName>
        <fullName evidence="1">Ubiquinone/menaquinone biosynthesis C-methyltransferase UbiE</fullName>
        <ecNumber evidence="1">2.1.1.163</ecNumber>
        <ecNumber evidence="1">2.1.1.201</ecNumber>
    </recommendedName>
    <alternativeName>
        <fullName evidence="1">2-methoxy-6-polyprenyl-1,4-benzoquinol methylase</fullName>
    </alternativeName>
    <alternativeName>
        <fullName evidence="1">Demethylmenaquinone methyltransferase</fullName>
    </alternativeName>
</protein>
<comment type="function">
    <text evidence="1">Methyltransferase required for the conversion of demethylmenaquinol (DMKH2) to menaquinol (MKH2) and the conversion of 2-polyprenyl-6-methoxy-1,4-benzoquinol (DDMQH2) to 2-polyprenyl-3-methyl-6-methoxy-1,4-benzoquinol (DMQH2).</text>
</comment>
<comment type="catalytic activity">
    <reaction evidence="1">
        <text>a 2-demethylmenaquinol + S-adenosyl-L-methionine = a menaquinol + S-adenosyl-L-homocysteine + H(+)</text>
        <dbReference type="Rhea" id="RHEA:42640"/>
        <dbReference type="Rhea" id="RHEA-COMP:9539"/>
        <dbReference type="Rhea" id="RHEA-COMP:9563"/>
        <dbReference type="ChEBI" id="CHEBI:15378"/>
        <dbReference type="ChEBI" id="CHEBI:18151"/>
        <dbReference type="ChEBI" id="CHEBI:55437"/>
        <dbReference type="ChEBI" id="CHEBI:57856"/>
        <dbReference type="ChEBI" id="CHEBI:59789"/>
        <dbReference type="EC" id="2.1.1.163"/>
    </reaction>
</comment>
<comment type="catalytic activity">
    <reaction evidence="1">
        <text>a 2-methoxy-6-(all-trans-polyprenyl)benzene-1,4-diol + S-adenosyl-L-methionine = a 5-methoxy-2-methyl-3-(all-trans-polyprenyl)benzene-1,4-diol + S-adenosyl-L-homocysteine + H(+)</text>
        <dbReference type="Rhea" id="RHEA:28286"/>
        <dbReference type="Rhea" id="RHEA-COMP:10858"/>
        <dbReference type="Rhea" id="RHEA-COMP:10859"/>
        <dbReference type="ChEBI" id="CHEBI:15378"/>
        <dbReference type="ChEBI" id="CHEBI:57856"/>
        <dbReference type="ChEBI" id="CHEBI:59789"/>
        <dbReference type="ChEBI" id="CHEBI:84166"/>
        <dbReference type="ChEBI" id="CHEBI:84167"/>
        <dbReference type="EC" id="2.1.1.201"/>
    </reaction>
</comment>
<comment type="pathway">
    <text evidence="1">Quinol/quinone metabolism; menaquinone biosynthesis; menaquinol from 1,4-dihydroxy-2-naphthoate: step 2/2.</text>
</comment>
<comment type="pathway">
    <text evidence="1">Cofactor biosynthesis; ubiquinone biosynthesis.</text>
</comment>
<comment type="similarity">
    <text evidence="1">Belongs to the class I-like SAM-binding methyltransferase superfamily. MenG/UbiE family.</text>
</comment>
<dbReference type="EC" id="2.1.1.163" evidence="1"/>
<dbReference type="EC" id="2.1.1.201" evidence="1"/>
<dbReference type="EMBL" id="CP001052">
    <property type="protein sequence ID" value="ACD15074.1"/>
    <property type="molecule type" value="Genomic_DNA"/>
</dbReference>
<dbReference type="RefSeq" id="WP_012431711.1">
    <property type="nucleotide sequence ID" value="NC_010681.1"/>
</dbReference>
<dbReference type="SMR" id="B2SX35"/>
<dbReference type="STRING" id="398527.Bphyt_0649"/>
<dbReference type="KEGG" id="bpy:Bphyt_0649"/>
<dbReference type="eggNOG" id="COG2226">
    <property type="taxonomic scope" value="Bacteria"/>
</dbReference>
<dbReference type="HOGENOM" id="CLU_037990_0_0_4"/>
<dbReference type="OrthoDB" id="9808140at2"/>
<dbReference type="UniPathway" id="UPA00079">
    <property type="reaction ID" value="UER00169"/>
</dbReference>
<dbReference type="UniPathway" id="UPA00232"/>
<dbReference type="Proteomes" id="UP000001739">
    <property type="component" value="Chromosome 1"/>
</dbReference>
<dbReference type="GO" id="GO:0008425">
    <property type="term" value="F:2-methoxy-6-polyprenyl-1,4-benzoquinol methyltransferase activity"/>
    <property type="evidence" value="ECO:0007669"/>
    <property type="project" value="UniProtKB-UniRule"/>
</dbReference>
<dbReference type="GO" id="GO:0043770">
    <property type="term" value="F:demethylmenaquinone methyltransferase activity"/>
    <property type="evidence" value="ECO:0007669"/>
    <property type="project" value="UniProtKB-UniRule"/>
</dbReference>
<dbReference type="GO" id="GO:0009060">
    <property type="term" value="P:aerobic respiration"/>
    <property type="evidence" value="ECO:0007669"/>
    <property type="project" value="UniProtKB-UniRule"/>
</dbReference>
<dbReference type="GO" id="GO:0009234">
    <property type="term" value="P:menaquinone biosynthetic process"/>
    <property type="evidence" value="ECO:0007669"/>
    <property type="project" value="UniProtKB-UniRule"/>
</dbReference>
<dbReference type="GO" id="GO:0032259">
    <property type="term" value="P:methylation"/>
    <property type="evidence" value="ECO:0007669"/>
    <property type="project" value="UniProtKB-KW"/>
</dbReference>
<dbReference type="CDD" id="cd02440">
    <property type="entry name" value="AdoMet_MTases"/>
    <property type="match status" value="1"/>
</dbReference>
<dbReference type="Gene3D" id="3.40.50.150">
    <property type="entry name" value="Vaccinia Virus protein VP39"/>
    <property type="match status" value="1"/>
</dbReference>
<dbReference type="HAMAP" id="MF_01813">
    <property type="entry name" value="MenG_UbiE_methyltr"/>
    <property type="match status" value="1"/>
</dbReference>
<dbReference type="InterPro" id="IPR029063">
    <property type="entry name" value="SAM-dependent_MTases_sf"/>
</dbReference>
<dbReference type="InterPro" id="IPR004033">
    <property type="entry name" value="UbiE/COQ5_MeTrFase"/>
</dbReference>
<dbReference type="InterPro" id="IPR023576">
    <property type="entry name" value="UbiE/COQ5_MeTrFase_CS"/>
</dbReference>
<dbReference type="NCBIfam" id="TIGR01934">
    <property type="entry name" value="MenG_MenH_UbiE"/>
    <property type="match status" value="1"/>
</dbReference>
<dbReference type="NCBIfam" id="NF001240">
    <property type="entry name" value="PRK00216.1-1"/>
    <property type="match status" value="1"/>
</dbReference>
<dbReference type="PANTHER" id="PTHR43591:SF24">
    <property type="entry name" value="2-METHOXY-6-POLYPRENYL-1,4-BENZOQUINOL METHYLASE, MITOCHONDRIAL"/>
    <property type="match status" value="1"/>
</dbReference>
<dbReference type="PANTHER" id="PTHR43591">
    <property type="entry name" value="METHYLTRANSFERASE"/>
    <property type="match status" value="1"/>
</dbReference>
<dbReference type="Pfam" id="PF01209">
    <property type="entry name" value="Ubie_methyltran"/>
    <property type="match status" value="1"/>
</dbReference>
<dbReference type="SUPFAM" id="SSF53335">
    <property type="entry name" value="S-adenosyl-L-methionine-dependent methyltransferases"/>
    <property type="match status" value="1"/>
</dbReference>
<dbReference type="PROSITE" id="PS51608">
    <property type="entry name" value="SAM_MT_UBIE"/>
    <property type="match status" value="1"/>
</dbReference>
<dbReference type="PROSITE" id="PS01183">
    <property type="entry name" value="UBIE_1"/>
    <property type="match status" value="1"/>
</dbReference>
<sequence>MSKTHFGFQSVDEQDKAQKVAGVFHSVAANYDLMNDLMSGGLHRAWKMFTIAQANVRPGYKVLDIAGGTGDLSKAFAKQAGDTGEVWHTDINESMLRVGRDRLLDKGVITPALLCDAEKIPFPDNYFDVVTVAFGLRNMTHKDVALAEMRRVLKPAGRLLVLEFSKVWDPLKKVYDVYSFKVLPWLGERFAKDAESYQYLAESIRMHPDQETLKTMMEQAGLDGVKYYNLSAGVVALHVGTKY</sequence>
<organism>
    <name type="scientific">Paraburkholderia phytofirmans (strain DSM 17436 / LMG 22146 / PsJN)</name>
    <name type="common">Burkholderia phytofirmans</name>
    <dbReference type="NCBI Taxonomy" id="398527"/>
    <lineage>
        <taxon>Bacteria</taxon>
        <taxon>Pseudomonadati</taxon>
        <taxon>Pseudomonadota</taxon>
        <taxon>Betaproteobacteria</taxon>
        <taxon>Burkholderiales</taxon>
        <taxon>Burkholderiaceae</taxon>
        <taxon>Paraburkholderia</taxon>
    </lineage>
</organism>
<feature type="chain" id="PRO_1000187741" description="Ubiquinone/menaquinone biosynthesis C-methyltransferase UbiE">
    <location>
        <begin position="1"/>
        <end position="243"/>
    </location>
</feature>
<feature type="binding site" evidence="1">
    <location>
        <position position="69"/>
    </location>
    <ligand>
        <name>S-adenosyl-L-methionine</name>
        <dbReference type="ChEBI" id="CHEBI:59789"/>
    </ligand>
</feature>
<feature type="binding site" evidence="1">
    <location>
        <position position="90"/>
    </location>
    <ligand>
        <name>S-adenosyl-L-methionine</name>
        <dbReference type="ChEBI" id="CHEBI:59789"/>
    </ligand>
</feature>
<feature type="binding site" evidence="1">
    <location>
        <begin position="116"/>
        <end position="117"/>
    </location>
    <ligand>
        <name>S-adenosyl-L-methionine</name>
        <dbReference type="ChEBI" id="CHEBI:59789"/>
    </ligand>
</feature>
<keyword id="KW-0474">Menaquinone biosynthesis</keyword>
<keyword id="KW-0489">Methyltransferase</keyword>
<keyword id="KW-0949">S-adenosyl-L-methionine</keyword>
<keyword id="KW-0808">Transferase</keyword>
<keyword id="KW-0831">Ubiquinone biosynthesis</keyword>
<accession>B2SX35</accession>
<reference key="1">
    <citation type="journal article" date="2011" name="J. Bacteriol.">
        <title>Complete genome sequence of the plant growth-promoting endophyte Burkholderia phytofirmans strain PsJN.</title>
        <authorList>
            <person name="Weilharter A."/>
            <person name="Mitter B."/>
            <person name="Shin M.V."/>
            <person name="Chain P.S."/>
            <person name="Nowak J."/>
            <person name="Sessitsch A."/>
        </authorList>
    </citation>
    <scope>NUCLEOTIDE SEQUENCE [LARGE SCALE GENOMIC DNA]</scope>
    <source>
        <strain>DSM 17436 / LMG 22146 / PsJN</strain>
    </source>
</reference>
<evidence type="ECO:0000255" key="1">
    <source>
        <dbReference type="HAMAP-Rule" id="MF_01813"/>
    </source>
</evidence>
<name>UBIE_PARPJ</name>